<sequence length="425" mass="48653">MLDLDLIRNDTEKVKKALLKKIDNVDFTELLKLDDERRKLIHEVEVLKNKKNEASKQISNIKSQGGKVDESFFKDIKEISNKISELETSLEPIKGKMDTFLEALPNIPDEDVLPGGKENNKVVHVYGEKPQFEFEPKDHVELSNIHDLIDYKRGTKLSGNGFWIYKGYGAILEWALLNYFIEEHIKDGYEFILPPHILNYECGRTAGQFPKFKDEVFKVGSNGEGEGMQFILPTAETALVNLHRDEILKEDELPKKYFAYTPCYRVEAGSYRASERGMIRGHQFNKIEMFQYTKPEDSDAALEELIGKAEKLVKGLGLHYRLSKLAAADCSASMAKTYDIEVWIPSMNEYKEVSSASNARDYQARRGKIRFRREETKKIEYVNTLNASGLATSRVLPAILEQMQDKDGSIVVPEVLRKWVGKDKL</sequence>
<name>SYS2_CLOAB</name>
<feature type="chain" id="PRO_0000122035" description="Serine--tRNA ligase 2">
    <location>
        <begin position="1"/>
        <end position="425"/>
    </location>
</feature>
<feature type="binding site" evidence="1">
    <location>
        <begin position="234"/>
        <end position="236"/>
    </location>
    <ligand>
        <name>L-serine</name>
        <dbReference type="ChEBI" id="CHEBI:33384"/>
    </ligand>
</feature>
<feature type="binding site" evidence="1">
    <location>
        <begin position="265"/>
        <end position="267"/>
    </location>
    <ligand>
        <name>ATP</name>
        <dbReference type="ChEBI" id="CHEBI:30616"/>
    </ligand>
</feature>
<feature type="binding site" evidence="1">
    <location>
        <position position="288"/>
    </location>
    <ligand>
        <name>L-serine</name>
        <dbReference type="ChEBI" id="CHEBI:33384"/>
    </ligand>
</feature>
<feature type="binding site" evidence="1">
    <location>
        <begin position="352"/>
        <end position="355"/>
    </location>
    <ligand>
        <name>ATP</name>
        <dbReference type="ChEBI" id="CHEBI:30616"/>
    </ligand>
</feature>
<feature type="binding site" evidence="1">
    <location>
        <position position="388"/>
    </location>
    <ligand>
        <name>L-serine</name>
        <dbReference type="ChEBI" id="CHEBI:33384"/>
    </ligand>
</feature>
<dbReference type="EC" id="6.1.1.11" evidence="1"/>
<dbReference type="EMBL" id="AE001437">
    <property type="protein sequence ID" value="AAK78004.1"/>
    <property type="molecule type" value="Genomic_DNA"/>
</dbReference>
<dbReference type="PIR" id="A96902">
    <property type="entry name" value="A96902"/>
</dbReference>
<dbReference type="RefSeq" id="NP_346664.1">
    <property type="nucleotide sequence ID" value="NC_003030.1"/>
</dbReference>
<dbReference type="SMR" id="Q97N21"/>
<dbReference type="STRING" id="272562.CA_C0017"/>
<dbReference type="KEGG" id="cac:CA_C0017"/>
<dbReference type="PATRIC" id="fig|272562.8.peg.196"/>
<dbReference type="eggNOG" id="COG0172">
    <property type="taxonomic scope" value="Bacteria"/>
</dbReference>
<dbReference type="HOGENOM" id="CLU_023797_1_1_9"/>
<dbReference type="OrthoDB" id="9804647at2"/>
<dbReference type="UniPathway" id="UPA00906">
    <property type="reaction ID" value="UER00895"/>
</dbReference>
<dbReference type="Proteomes" id="UP000000814">
    <property type="component" value="Chromosome"/>
</dbReference>
<dbReference type="GO" id="GO:0005737">
    <property type="term" value="C:cytoplasm"/>
    <property type="evidence" value="ECO:0007669"/>
    <property type="project" value="UniProtKB-SubCell"/>
</dbReference>
<dbReference type="GO" id="GO:0005524">
    <property type="term" value="F:ATP binding"/>
    <property type="evidence" value="ECO:0007669"/>
    <property type="project" value="UniProtKB-UniRule"/>
</dbReference>
<dbReference type="GO" id="GO:0140096">
    <property type="term" value="F:catalytic activity, acting on a protein"/>
    <property type="evidence" value="ECO:0007669"/>
    <property type="project" value="UniProtKB-ARBA"/>
</dbReference>
<dbReference type="GO" id="GO:0004828">
    <property type="term" value="F:serine-tRNA ligase activity"/>
    <property type="evidence" value="ECO:0007669"/>
    <property type="project" value="UniProtKB-UniRule"/>
</dbReference>
<dbReference type="GO" id="GO:0016740">
    <property type="term" value="F:transferase activity"/>
    <property type="evidence" value="ECO:0007669"/>
    <property type="project" value="UniProtKB-ARBA"/>
</dbReference>
<dbReference type="GO" id="GO:0016260">
    <property type="term" value="P:selenocysteine biosynthetic process"/>
    <property type="evidence" value="ECO:0007669"/>
    <property type="project" value="UniProtKB-UniRule"/>
</dbReference>
<dbReference type="GO" id="GO:0006434">
    <property type="term" value="P:seryl-tRNA aminoacylation"/>
    <property type="evidence" value="ECO:0007669"/>
    <property type="project" value="UniProtKB-UniRule"/>
</dbReference>
<dbReference type="Gene3D" id="3.30.930.10">
    <property type="entry name" value="Bira Bifunctional Protein, Domain 2"/>
    <property type="match status" value="1"/>
</dbReference>
<dbReference type="Gene3D" id="1.10.287.40">
    <property type="entry name" value="Serine-tRNA synthetase, tRNA binding domain"/>
    <property type="match status" value="1"/>
</dbReference>
<dbReference type="HAMAP" id="MF_00176">
    <property type="entry name" value="Ser_tRNA_synth_type1"/>
    <property type="match status" value="1"/>
</dbReference>
<dbReference type="InterPro" id="IPR002314">
    <property type="entry name" value="aa-tRNA-synt_IIb"/>
</dbReference>
<dbReference type="InterPro" id="IPR006195">
    <property type="entry name" value="aa-tRNA-synth_II"/>
</dbReference>
<dbReference type="InterPro" id="IPR045864">
    <property type="entry name" value="aa-tRNA-synth_II/BPL/LPL"/>
</dbReference>
<dbReference type="InterPro" id="IPR002317">
    <property type="entry name" value="Ser-tRNA-ligase_type_1"/>
</dbReference>
<dbReference type="InterPro" id="IPR015866">
    <property type="entry name" value="Ser-tRNA-synth_1_N"/>
</dbReference>
<dbReference type="InterPro" id="IPR042103">
    <property type="entry name" value="SerRS_1_N_sf"/>
</dbReference>
<dbReference type="InterPro" id="IPR010978">
    <property type="entry name" value="tRNA-bd_arm"/>
</dbReference>
<dbReference type="NCBIfam" id="TIGR00414">
    <property type="entry name" value="serS"/>
    <property type="match status" value="1"/>
</dbReference>
<dbReference type="PANTHER" id="PTHR43697:SF1">
    <property type="entry name" value="SERINE--TRNA LIGASE"/>
    <property type="match status" value="1"/>
</dbReference>
<dbReference type="PANTHER" id="PTHR43697">
    <property type="entry name" value="SERYL-TRNA SYNTHETASE"/>
    <property type="match status" value="1"/>
</dbReference>
<dbReference type="Pfam" id="PF02403">
    <property type="entry name" value="Seryl_tRNA_N"/>
    <property type="match status" value="1"/>
</dbReference>
<dbReference type="Pfam" id="PF00587">
    <property type="entry name" value="tRNA-synt_2b"/>
    <property type="match status" value="1"/>
</dbReference>
<dbReference type="PIRSF" id="PIRSF001529">
    <property type="entry name" value="Ser-tRNA-synth_IIa"/>
    <property type="match status" value="1"/>
</dbReference>
<dbReference type="PRINTS" id="PR00981">
    <property type="entry name" value="TRNASYNTHSER"/>
</dbReference>
<dbReference type="SUPFAM" id="SSF55681">
    <property type="entry name" value="Class II aaRS and biotin synthetases"/>
    <property type="match status" value="1"/>
</dbReference>
<dbReference type="SUPFAM" id="SSF46589">
    <property type="entry name" value="tRNA-binding arm"/>
    <property type="match status" value="1"/>
</dbReference>
<dbReference type="PROSITE" id="PS50862">
    <property type="entry name" value="AA_TRNA_LIGASE_II"/>
    <property type="match status" value="1"/>
</dbReference>
<gene>
    <name evidence="1" type="primary">serS2</name>
    <name type="ordered locus">CA_C0017</name>
</gene>
<proteinExistence type="inferred from homology"/>
<reference key="1">
    <citation type="journal article" date="2001" name="J. Bacteriol.">
        <title>Genome sequence and comparative analysis of the solvent-producing bacterium Clostridium acetobutylicum.</title>
        <authorList>
            <person name="Noelling J."/>
            <person name="Breton G."/>
            <person name="Omelchenko M.V."/>
            <person name="Makarova K.S."/>
            <person name="Zeng Q."/>
            <person name="Gibson R."/>
            <person name="Lee H.M."/>
            <person name="Dubois J."/>
            <person name="Qiu D."/>
            <person name="Hitti J."/>
            <person name="Wolf Y.I."/>
            <person name="Tatusov R.L."/>
            <person name="Sabathe F."/>
            <person name="Doucette-Stamm L.A."/>
            <person name="Soucaille P."/>
            <person name="Daly M.J."/>
            <person name="Bennett G.N."/>
            <person name="Koonin E.V."/>
            <person name="Smith D.R."/>
        </authorList>
    </citation>
    <scope>NUCLEOTIDE SEQUENCE [LARGE SCALE GENOMIC DNA]</scope>
    <source>
        <strain>ATCC 824 / DSM 792 / JCM 1419 / IAM 19013 / LMG 5710 / NBRC 13948 / NRRL B-527 / VKM B-1787 / 2291 / W</strain>
    </source>
</reference>
<organism>
    <name type="scientific">Clostridium acetobutylicum (strain ATCC 824 / DSM 792 / JCM 1419 / IAM 19013 / LMG 5710 / NBRC 13948 / NRRL B-527 / VKM B-1787 / 2291 / W)</name>
    <dbReference type="NCBI Taxonomy" id="272562"/>
    <lineage>
        <taxon>Bacteria</taxon>
        <taxon>Bacillati</taxon>
        <taxon>Bacillota</taxon>
        <taxon>Clostridia</taxon>
        <taxon>Eubacteriales</taxon>
        <taxon>Clostridiaceae</taxon>
        <taxon>Clostridium</taxon>
    </lineage>
</organism>
<keyword id="KW-0030">Aminoacyl-tRNA synthetase</keyword>
<keyword id="KW-0067">ATP-binding</keyword>
<keyword id="KW-0963">Cytoplasm</keyword>
<keyword id="KW-0436">Ligase</keyword>
<keyword id="KW-0547">Nucleotide-binding</keyword>
<keyword id="KW-0648">Protein biosynthesis</keyword>
<keyword id="KW-1185">Reference proteome</keyword>
<comment type="function">
    <text evidence="1">Catalyzes the attachment of serine to tRNA(Ser). Is also able to aminoacylate tRNA(Sec) with serine, to form the misacylated tRNA L-seryl-tRNA(Sec), which will be further converted into selenocysteinyl-tRNA(Sec).</text>
</comment>
<comment type="catalytic activity">
    <reaction evidence="1">
        <text>tRNA(Ser) + L-serine + ATP = L-seryl-tRNA(Ser) + AMP + diphosphate + H(+)</text>
        <dbReference type="Rhea" id="RHEA:12292"/>
        <dbReference type="Rhea" id="RHEA-COMP:9669"/>
        <dbReference type="Rhea" id="RHEA-COMP:9703"/>
        <dbReference type="ChEBI" id="CHEBI:15378"/>
        <dbReference type="ChEBI" id="CHEBI:30616"/>
        <dbReference type="ChEBI" id="CHEBI:33019"/>
        <dbReference type="ChEBI" id="CHEBI:33384"/>
        <dbReference type="ChEBI" id="CHEBI:78442"/>
        <dbReference type="ChEBI" id="CHEBI:78533"/>
        <dbReference type="ChEBI" id="CHEBI:456215"/>
        <dbReference type="EC" id="6.1.1.11"/>
    </reaction>
</comment>
<comment type="catalytic activity">
    <reaction evidence="1">
        <text>tRNA(Sec) + L-serine + ATP = L-seryl-tRNA(Sec) + AMP + diphosphate + H(+)</text>
        <dbReference type="Rhea" id="RHEA:42580"/>
        <dbReference type="Rhea" id="RHEA-COMP:9742"/>
        <dbReference type="Rhea" id="RHEA-COMP:10128"/>
        <dbReference type="ChEBI" id="CHEBI:15378"/>
        <dbReference type="ChEBI" id="CHEBI:30616"/>
        <dbReference type="ChEBI" id="CHEBI:33019"/>
        <dbReference type="ChEBI" id="CHEBI:33384"/>
        <dbReference type="ChEBI" id="CHEBI:78442"/>
        <dbReference type="ChEBI" id="CHEBI:78533"/>
        <dbReference type="ChEBI" id="CHEBI:456215"/>
        <dbReference type="EC" id="6.1.1.11"/>
    </reaction>
</comment>
<comment type="pathway">
    <text evidence="1">Aminoacyl-tRNA biosynthesis; selenocysteinyl-tRNA(Sec) biosynthesis; L-seryl-tRNA(Sec) from L-serine and tRNA(Sec): step 1/1.</text>
</comment>
<comment type="subunit">
    <text evidence="1">Homodimer. The tRNA molecule binds across the dimer.</text>
</comment>
<comment type="subcellular location">
    <subcellularLocation>
        <location evidence="1">Cytoplasm</location>
    </subcellularLocation>
</comment>
<comment type="domain">
    <text evidence="1">Consists of two distinct domains, a catalytic core and a N-terminal extension that is involved in tRNA binding.</text>
</comment>
<comment type="similarity">
    <text evidence="1">Belongs to the class-II aminoacyl-tRNA synthetase family. Type-1 seryl-tRNA synthetase subfamily.</text>
</comment>
<accession>Q97N21</accession>
<evidence type="ECO:0000255" key="1">
    <source>
        <dbReference type="HAMAP-Rule" id="MF_00176"/>
    </source>
</evidence>
<protein>
    <recommendedName>
        <fullName evidence="1">Serine--tRNA ligase 2</fullName>
        <ecNumber evidence="1">6.1.1.11</ecNumber>
    </recommendedName>
    <alternativeName>
        <fullName evidence="1">Seryl-tRNA synthetase 2</fullName>
        <shortName evidence="1">SerRS 2</shortName>
    </alternativeName>
    <alternativeName>
        <fullName evidence="1">Seryl-tRNA(Ser/Sec) synthetase 2</fullName>
    </alternativeName>
</protein>